<evidence type="ECO:0000255" key="1">
    <source>
        <dbReference type="HAMAP-Rule" id="MF_00006"/>
    </source>
</evidence>
<comment type="catalytic activity">
    <reaction evidence="1">
        <text>2-(N(omega)-L-arginino)succinate = fumarate + L-arginine</text>
        <dbReference type="Rhea" id="RHEA:24020"/>
        <dbReference type="ChEBI" id="CHEBI:29806"/>
        <dbReference type="ChEBI" id="CHEBI:32682"/>
        <dbReference type="ChEBI" id="CHEBI:57472"/>
        <dbReference type="EC" id="4.3.2.1"/>
    </reaction>
</comment>
<comment type="pathway">
    <text evidence="1">Amino-acid biosynthesis; L-arginine biosynthesis; L-arginine from L-ornithine and carbamoyl phosphate: step 3/3.</text>
</comment>
<comment type="subcellular location">
    <subcellularLocation>
        <location evidence="1">Cytoplasm</location>
    </subcellularLocation>
</comment>
<comment type="similarity">
    <text evidence="1">Belongs to the lyase 1 family. Argininosuccinate lyase subfamily.</text>
</comment>
<reference key="1">
    <citation type="journal article" date="2005" name="J. Bacteriol.">
        <title>Insights into genome plasticity and pathogenicity of the plant pathogenic Bacterium Xanthomonas campestris pv. vesicatoria revealed by the complete genome sequence.</title>
        <authorList>
            <person name="Thieme F."/>
            <person name="Koebnik R."/>
            <person name="Bekel T."/>
            <person name="Berger C."/>
            <person name="Boch J."/>
            <person name="Buettner D."/>
            <person name="Caldana C."/>
            <person name="Gaigalat L."/>
            <person name="Goesmann A."/>
            <person name="Kay S."/>
            <person name="Kirchner O."/>
            <person name="Lanz C."/>
            <person name="Linke B."/>
            <person name="McHardy A.C."/>
            <person name="Meyer F."/>
            <person name="Mittenhuber G."/>
            <person name="Nies D.H."/>
            <person name="Niesbach-Kloesgen U."/>
            <person name="Patschkowski T."/>
            <person name="Rueckert C."/>
            <person name="Rupp O."/>
            <person name="Schneiker S."/>
            <person name="Schuster S.C."/>
            <person name="Vorhoelter F.J."/>
            <person name="Weber E."/>
            <person name="Puehler A."/>
            <person name="Bonas U."/>
            <person name="Bartels D."/>
            <person name="Kaiser O."/>
        </authorList>
    </citation>
    <scope>NUCLEOTIDE SEQUENCE [LARGE SCALE GENOMIC DNA]</scope>
    <source>
        <strain>85-10</strain>
    </source>
</reference>
<accession>Q3BSI8</accession>
<protein>
    <recommendedName>
        <fullName evidence="1">Argininosuccinate lyase</fullName>
        <shortName evidence="1">ASAL</shortName>
        <ecNumber evidence="1">4.3.2.1</ecNumber>
    </recommendedName>
    <alternativeName>
        <fullName evidence="1">Arginosuccinase</fullName>
    </alternativeName>
</protein>
<name>ARLY_XANE5</name>
<sequence length="432" mass="46367">MTNLLWQKPGVAVDAKIQSFLAGDDVILDREFFLYDIAASKAHAQGLQHIGILSLQELGGLSEQLDLLAADFRSGAFVLDAQYEDCHSAIEARLTERLGDAGRKIHTGRSRNDQILVATRLWLKDKLQRVATLSAEIAKVALDRAQAEAGLPVPGYTHIQRAVVSSAGMWWAGWAEAFIDNAVRADDTVRLVDSNPLGTAAGYGVNLPLDRAHTTAELGFARLLVSPIYAQLSRGKYELAALEALGSATLDLRRIAWDLSLFTSGEFAFVALPAQYTTGSSIMPNKRNPDVIELMRATHASVAAARTEIEQLLSLPSGYHRDLQSSKGAIVHGFGRGLAALELLPALLANLEWRPDKLRAAIDSGMYATDVAVEAAVAGVPFREAYKAAAQAAETAGQGRTPEGSLAARVSPGAAADLQLDVLQARWQALRA</sequence>
<organism>
    <name type="scientific">Xanthomonas euvesicatoria pv. vesicatoria (strain 85-10)</name>
    <name type="common">Xanthomonas campestris pv. vesicatoria</name>
    <dbReference type="NCBI Taxonomy" id="316273"/>
    <lineage>
        <taxon>Bacteria</taxon>
        <taxon>Pseudomonadati</taxon>
        <taxon>Pseudomonadota</taxon>
        <taxon>Gammaproteobacteria</taxon>
        <taxon>Lysobacterales</taxon>
        <taxon>Lysobacteraceae</taxon>
        <taxon>Xanthomonas</taxon>
    </lineage>
</organism>
<dbReference type="EC" id="4.3.2.1" evidence="1"/>
<dbReference type="EMBL" id="AM039952">
    <property type="protein sequence ID" value="CAJ24221.1"/>
    <property type="molecule type" value="Genomic_DNA"/>
</dbReference>
<dbReference type="RefSeq" id="WP_011347702.1">
    <property type="nucleotide sequence ID" value="NZ_CP017190.1"/>
</dbReference>
<dbReference type="SMR" id="Q3BSI8"/>
<dbReference type="STRING" id="456327.BJD11_10180"/>
<dbReference type="KEGG" id="xcv:XCV2544"/>
<dbReference type="eggNOG" id="COG0165">
    <property type="taxonomic scope" value="Bacteria"/>
</dbReference>
<dbReference type="HOGENOM" id="CLU_027272_2_0_6"/>
<dbReference type="UniPathway" id="UPA00068">
    <property type="reaction ID" value="UER00114"/>
</dbReference>
<dbReference type="Proteomes" id="UP000007069">
    <property type="component" value="Chromosome"/>
</dbReference>
<dbReference type="GO" id="GO:0005829">
    <property type="term" value="C:cytosol"/>
    <property type="evidence" value="ECO:0007669"/>
    <property type="project" value="TreeGrafter"/>
</dbReference>
<dbReference type="GO" id="GO:0004056">
    <property type="term" value="F:argininosuccinate lyase activity"/>
    <property type="evidence" value="ECO:0007669"/>
    <property type="project" value="UniProtKB-UniRule"/>
</dbReference>
<dbReference type="GO" id="GO:0042450">
    <property type="term" value="P:arginine biosynthetic process via ornithine"/>
    <property type="evidence" value="ECO:0007669"/>
    <property type="project" value="InterPro"/>
</dbReference>
<dbReference type="GO" id="GO:0006526">
    <property type="term" value="P:L-arginine biosynthetic process"/>
    <property type="evidence" value="ECO:0007669"/>
    <property type="project" value="UniProtKB-UniRule"/>
</dbReference>
<dbReference type="Gene3D" id="1.10.40.30">
    <property type="entry name" value="Fumarase/aspartase (C-terminal domain)"/>
    <property type="match status" value="1"/>
</dbReference>
<dbReference type="Gene3D" id="1.20.200.10">
    <property type="entry name" value="Fumarase/aspartase (Central domain)"/>
    <property type="match status" value="1"/>
</dbReference>
<dbReference type="Gene3D" id="1.10.275.10">
    <property type="entry name" value="Fumarase/aspartase (N-terminal domain)"/>
    <property type="match status" value="1"/>
</dbReference>
<dbReference type="HAMAP" id="MF_00006">
    <property type="entry name" value="Arg_succ_lyase"/>
    <property type="match status" value="1"/>
</dbReference>
<dbReference type="InterPro" id="IPR009049">
    <property type="entry name" value="Argininosuccinate_lyase"/>
</dbReference>
<dbReference type="InterPro" id="IPR024083">
    <property type="entry name" value="Fumarase/histidase_N"/>
</dbReference>
<dbReference type="InterPro" id="IPR020557">
    <property type="entry name" value="Fumarate_lyase_CS"/>
</dbReference>
<dbReference type="InterPro" id="IPR000362">
    <property type="entry name" value="Fumarate_lyase_fam"/>
</dbReference>
<dbReference type="InterPro" id="IPR022761">
    <property type="entry name" value="Fumarate_lyase_N"/>
</dbReference>
<dbReference type="InterPro" id="IPR008948">
    <property type="entry name" value="L-Aspartase-like"/>
</dbReference>
<dbReference type="PANTHER" id="PTHR43814">
    <property type="entry name" value="ARGININOSUCCINATE LYASE"/>
    <property type="match status" value="1"/>
</dbReference>
<dbReference type="PANTHER" id="PTHR43814:SF1">
    <property type="entry name" value="ARGININOSUCCINATE LYASE"/>
    <property type="match status" value="1"/>
</dbReference>
<dbReference type="Pfam" id="PF00206">
    <property type="entry name" value="Lyase_1"/>
    <property type="match status" value="1"/>
</dbReference>
<dbReference type="PRINTS" id="PR00145">
    <property type="entry name" value="ARGSUCLYASE"/>
</dbReference>
<dbReference type="PRINTS" id="PR00149">
    <property type="entry name" value="FUMRATELYASE"/>
</dbReference>
<dbReference type="SUPFAM" id="SSF48557">
    <property type="entry name" value="L-aspartase-like"/>
    <property type="match status" value="1"/>
</dbReference>
<dbReference type="PROSITE" id="PS00163">
    <property type="entry name" value="FUMARATE_LYASES"/>
    <property type="match status" value="1"/>
</dbReference>
<gene>
    <name evidence="1" type="primary">argH</name>
    <name type="ordered locus">XCV2544</name>
</gene>
<feature type="chain" id="PRO_1000089127" description="Argininosuccinate lyase">
    <location>
        <begin position="1"/>
        <end position="432"/>
    </location>
</feature>
<keyword id="KW-0028">Amino-acid biosynthesis</keyword>
<keyword id="KW-0055">Arginine biosynthesis</keyword>
<keyword id="KW-0963">Cytoplasm</keyword>
<keyword id="KW-0456">Lyase</keyword>
<proteinExistence type="inferred from homology"/>